<proteinExistence type="inferred from homology"/>
<keyword id="KW-0028">Amino-acid biosynthesis</keyword>
<keyword id="KW-0057">Aromatic amino acid biosynthesis</keyword>
<keyword id="KW-0210">Decarboxylase</keyword>
<keyword id="KW-0456">Lyase</keyword>
<keyword id="KW-0822">Tryptophan biosynthesis</keyword>
<protein>
    <recommendedName>
        <fullName evidence="1">Indole-3-glycerol phosphate synthase</fullName>
        <shortName evidence="1">IGPS</shortName>
        <ecNumber evidence="1">4.1.1.48</ecNumber>
    </recommendedName>
</protein>
<accession>B9KMV0</accession>
<feature type="chain" id="PRO_1000198784" description="Indole-3-glycerol phosphate synthase">
    <location>
        <begin position="1"/>
        <end position="270"/>
    </location>
</feature>
<sequence length="270" mass="29218">MSTILDRIKAYKLEEIAARKAERPLVAVEDAARAAPAPRGFARALSTAAATGYGLIAEIKKASPSKGLIREDFDVPALARAYEAGGATCLSVLTDGPSFQGADDFLRQAREAVKLPCLRKDFLYDTYQVAEARALGADCILIIMASVTDSQALELEAAASHWGMDVLVEVHSRDELARAEHLKSRLIGINNRNLDTFEVSLDVTRDLARRVPEDRLIVSESGLYTPEDLADLARYGARCFLIGESLMRQADVEAATRAILADPLTSQGGV</sequence>
<evidence type="ECO:0000255" key="1">
    <source>
        <dbReference type="HAMAP-Rule" id="MF_00134"/>
    </source>
</evidence>
<comment type="catalytic activity">
    <reaction evidence="1">
        <text>1-(2-carboxyphenylamino)-1-deoxy-D-ribulose 5-phosphate + H(+) = (1S,2R)-1-C-(indol-3-yl)glycerol 3-phosphate + CO2 + H2O</text>
        <dbReference type="Rhea" id="RHEA:23476"/>
        <dbReference type="ChEBI" id="CHEBI:15377"/>
        <dbReference type="ChEBI" id="CHEBI:15378"/>
        <dbReference type="ChEBI" id="CHEBI:16526"/>
        <dbReference type="ChEBI" id="CHEBI:58613"/>
        <dbReference type="ChEBI" id="CHEBI:58866"/>
        <dbReference type="EC" id="4.1.1.48"/>
    </reaction>
</comment>
<comment type="pathway">
    <text evidence="1">Amino-acid biosynthesis; L-tryptophan biosynthesis; L-tryptophan from chorismate: step 4/5.</text>
</comment>
<comment type="similarity">
    <text evidence="1">Belongs to the TrpC family.</text>
</comment>
<gene>
    <name evidence="1" type="primary">trpC</name>
    <name type="ordered locus">RSKD131_0302</name>
</gene>
<reference key="1">
    <citation type="journal article" date="2009" name="J. Bacteriol.">
        <title>Complete genome sequence of Rhodobacter sphaeroides KD131.</title>
        <authorList>
            <person name="Lim S.-K."/>
            <person name="Kim S.J."/>
            <person name="Cha S.H."/>
            <person name="Oh Y.-K."/>
            <person name="Rhee H.-J."/>
            <person name="Kim M.-S."/>
            <person name="Lee J.K."/>
        </authorList>
    </citation>
    <scope>NUCLEOTIDE SEQUENCE [LARGE SCALE GENOMIC DNA]</scope>
    <source>
        <strain>KD131 / KCTC 12085</strain>
    </source>
</reference>
<name>TRPC_CERSK</name>
<organism>
    <name type="scientific">Cereibacter sphaeroides (strain KD131 / KCTC 12085)</name>
    <name type="common">Rhodobacter sphaeroides</name>
    <dbReference type="NCBI Taxonomy" id="557760"/>
    <lineage>
        <taxon>Bacteria</taxon>
        <taxon>Pseudomonadati</taxon>
        <taxon>Pseudomonadota</taxon>
        <taxon>Alphaproteobacteria</taxon>
        <taxon>Rhodobacterales</taxon>
        <taxon>Paracoccaceae</taxon>
        <taxon>Cereibacter</taxon>
    </lineage>
</organism>
<dbReference type="EC" id="4.1.1.48" evidence="1"/>
<dbReference type="EMBL" id="CP001150">
    <property type="protein sequence ID" value="ACM00162.1"/>
    <property type="molecule type" value="Genomic_DNA"/>
</dbReference>
<dbReference type="RefSeq" id="WP_012643618.1">
    <property type="nucleotide sequence ID" value="NC_011963.1"/>
</dbReference>
<dbReference type="SMR" id="B9KMV0"/>
<dbReference type="GeneID" id="67445781"/>
<dbReference type="KEGG" id="rsk:RSKD131_0302"/>
<dbReference type="HOGENOM" id="CLU_034247_2_0_5"/>
<dbReference type="UniPathway" id="UPA00035">
    <property type="reaction ID" value="UER00043"/>
</dbReference>
<dbReference type="GO" id="GO:0004425">
    <property type="term" value="F:indole-3-glycerol-phosphate synthase activity"/>
    <property type="evidence" value="ECO:0007669"/>
    <property type="project" value="UniProtKB-UniRule"/>
</dbReference>
<dbReference type="GO" id="GO:0004640">
    <property type="term" value="F:phosphoribosylanthranilate isomerase activity"/>
    <property type="evidence" value="ECO:0007669"/>
    <property type="project" value="TreeGrafter"/>
</dbReference>
<dbReference type="GO" id="GO:0000162">
    <property type="term" value="P:L-tryptophan biosynthetic process"/>
    <property type="evidence" value="ECO:0007669"/>
    <property type="project" value="UniProtKB-UniRule"/>
</dbReference>
<dbReference type="CDD" id="cd00331">
    <property type="entry name" value="IGPS"/>
    <property type="match status" value="1"/>
</dbReference>
<dbReference type="FunFam" id="3.20.20.70:FF:000024">
    <property type="entry name" value="Indole-3-glycerol phosphate synthase"/>
    <property type="match status" value="1"/>
</dbReference>
<dbReference type="Gene3D" id="3.20.20.70">
    <property type="entry name" value="Aldolase class I"/>
    <property type="match status" value="1"/>
</dbReference>
<dbReference type="HAMAP" id="MF_00134_B">
    <property type="entry name" value="IGPS_B"/>
    <property type="match status" value="1"/>
</dbReference>
<dbReference type="InterPro" id="IPR013785">
    <property type="entry name" value="Aldolase_TIM"/>
</dbReference>
<dbReference type="InterPro" id="IPR045186">
    <property type="entry name" value="Indole-3-glycerol_P_synth"/>
</dbReference>
<dbReference type="InterPro" id="IPR013798">
    <property type="entry name" value="Indole-3-glycerol_P_synth_dom"/>
</dbReference>
<dbReference type="InterPro" id="IPR001468">
    <property type="entry name" value="Indole-3-GlycerolPSynthase_CS"/>
</dbReference>
<dbReference type="InterPro" id="IPR011060">
    <property type="entry name" value="RibuloseP-bd_barrel"/>
</dbReference>
<dbReference type="NCBIfam" id="NF001370">
    <property type="entry name" value="PRK00278.1-2"/>
    <property type="match status" value="1"/>
</dbReference>
<dbReference type="NCBIfam" id="NF001373">
    <property type="entry name" value="PRK00278.1-6"/>
    <property type="match status" value="1"/>
</dbReference>
<dbReference type="NCBIfam" id="NF001377">
    <property type="entry name" value="PRK00278.2-4"/>
    <property type="match status" value="1"/>
</dbReference>
<dbReference type="PANTHER" id="PTHR22854:SF2">
    <property type="entry name" value="INDOLE-3-GLYCEROL-PHOSPHATE SYNTHASE"/>
    <property type="match status" value="1"/>
</dbReference>
<dbReference type="PANTHER" id="PTHR22854">
    <property type="entry name" value="TRYPTOPHAN BIOSYNTHESIS PROTEIN"/>
    <property type="match status" value="1"/>
</dbReference>
<dbReference type="Pfam" id="PF00218">
    <property type="entry name" value="IGPS"/>
    <property type="match status" value="1"/>
</dbReference>
<dbReference type="SUPFAM" id="SSF51366">
    <property type="entry name" value="Ribulose-phoshate binding barrel"/>
    <property type="match status" value="1"/>
</dbReference>
<dbReference type="PROSITE" id="PS00614">
    <property type="entry name" value="IGPS"/>
    <property type="match status" value="1"/>
</dbReference>